<accession>Q8N7U9</accession>
<accession>Q495E4</accession>
<evidence type="ECO:0000303" key="1">
    <source>
    </source>
</evidence>
<evidence type="ECO:0000305" key="2"/>
<gene>
    <name type="primary">LINC00469</name>
    <name type="synonym">C17orf54</name>
</gene>
<comment type="alternative products">
    <event type="alternative splicing"/>
    <isoform>
        <id>Q8N7U9-1</id>
        <name>1</name>
        <sequence type="displayed"/>
    </isoform>
    <isoform>
        <id>Q8N7U9-2</id>
        <name>2</name>
        <sequence type="described" ref="VSP_022495"/>
    </isoform>
</comment>
<comment type="caution">
    <text evidence="2">Product of a dubious CDS prediction. May be a non-coding RNA.</text>
</comment>
<feature type="chain" id="PRO_0000273204" description="Putative uncharacterized protein encoded by LINC00469">
    <location>
        <begin position="1"/>
        <end position="141"/>
    </location>
</feature>
<feature type="splice variant" id="VSP_022495" description="In isoform 2." evidence="1">
    <original>REVWEDADFICPVLKQCTNPKLNENKNIHQAKECEKSPFLSLSPHQQWKPGLPRRNDALPTSLCLCCSEN</original>
    <variation>KSEPLPRYYLYNQTELQGALWSGQHPPEGQGEIFQTVFQQRSLGRC</variation>
    <location>
        <begin position="72"/>
        <end position="141"/>
    </location>
</feature>
<feature type="sequence conflict" description="In Ref. 3; BC101214." evidence="2" ref="3">
    <original>P</original>
    <variation>S</variation>
    <location>
        <position position="30"/>
    </location>
</feature>
<reference key="1">
    <citation type="journal article" date="2004" name="Nat. Genet.">
        <title>Complete sequencing and characterization of 21,243 full-length human cDNAs.</title>
        <authorList>
            <person name="Ota T."/>
            <person name="Suzuki Y."/>
            <person name="Nishikawa T."/>
            <person name="Otsuki T."/>
            <person name="Sugiyama T."/>
            <person name="Irie R."/>
            <person name="Wakamatsu A."/>
            <person name="Hayashi K."/>
            <person name="Sato H."/>
            <person name="Nagai K."/>
            <person name="Kimura K."/>
            <person name="Makita H."/>
            <person name="Sekine M."/>
            <person name="Obayashi M."/>
            <person name="Nishi T."/>
            <person name="Shibahara T."/>
            <person name="Tanaka T."/>
            <person name="Ishii S."/>
            <person name="Yamamoto J."/>
            <person name="Saito K."/>
            <person name="Kawai Y."/>
            <person name="Isono Y."/>
            <person name="Nakamura Y."/>
            <person name="Nagahari K."/>
            <person name="Murakami K."/>
            <person name="Yasuda T."/>
            <person name="Iwayanagi T."/>
            <person name="Wagatsuma M."/>
            <person name="Shiratori A."/>
            <person name="Sudo H."/>
            <person name="Hosoiri T."/>
            <person name="Kaku Y."/>
            <person name="Kodaira H."/>
            <person name="Kondo H."/>
            <person name="Sugawara M."/>
            <person name="Takahashi M."/>
            <person name="Kanda K."/>
            <person name="Yokoi T."/>
            <person name="Furuya T."/>
            <person name="Kikkawa E."/>
            <person name="Omura Y."/>
            <person name="Abe K."/>
            <person name="Kamihara K."/>
            <person name="Katsuta N."/>
            <person name="Sato K."/>
            <person name="Tanikawa M."/>
            <person name="Yamazaki M."/>
            <person name="Ninomiya K."/>
            <person name="Ishibashi T."/>
            <person name="Yamashita H."/>
            <person name="Murakawa K."/>
            <person name="Fujimori K."/>
            <person name="Tanai H."/>
            <person name="Kimata M."/>
            <person name="Watanabe M."/>
            <person name="Hiraoka S."/>
            <person name="Chiba Y."/>
            <person name="Ishida S."/>
            <person name="Ono Y."/>
            <person name="Takiguchi S."/>
            <person name="Watanabe S."/>
            <person name="Yosida M."/>
            <person name="Hotuta T."/>
            <person name="Kusano J."/>
            <person name="Kanehori K."/>
            <person name="Takahashi-Fujii A."/>
            <person name="Hara H."/>
            <person name="Tanase T.-O."/>
            <person name="Nomura Y."/>
            <person name="Togiya S."/>
            <person name="Komai F."/>
            <person name="Hara R."/>
            <person name="Takeuchi K."/>
            <person name="Arita M."/>
            <person name="Imose N."/>
            <person name="Musashino K."/>
            <person name="Yuuki H."/>
            <person name="Oshima A."/>
            <person name="Sasaki N."/>
            <person name="Aotsuka S."/>
            <person name="Yoshikawa Y."/>
            <person name="Matsunawa H."/>
            <person name="Ichihara T."/>
            <person name="Shiohata N."/>
            <person name="Sano S."/>
            <person name="Moriya S."/>
            <person name="Momiyama H."/>
            <person name="Satoh N."/>
            <person name="Takami S."/>
            <person name="Terashima Y."/>
            <person name="Suzuki O."/>
            <person name="Nakagawa S."/>
            <person name="Senoh A."/>
            <person name="Mizoguchi H."/>
            <person name="Goto Y."/>
            <person name="Shimizu F."/>
            <person name="Wakebe H."/>
            <person name="Hishigaki H."/>
            <person name="Watanabe T."/>
            <person name="Sugiyama A."/>
            <person name="Takemoto M."/>
            <person name="Kawakami B."/>
            <person name="Yamazaki M."/>
            <person name="Watanabe K."/>
            <person name="Kumagai A."/>
            <person name="Itakura S."/>
            <person name="Fukuzumi Y."/>
            <person name="Fujimori Y."/>
            <person name="Komiyama M."/>
            <person name="Tashiro H."/>
            <person name="Tanigami A."/>
            <person name="Fujiwara T."/>
            <person name="Ono T."/>
            <person name="Yamada K."/>
            <person name="Fujii Y."/>
            <person name="Ozaki K."/>
            <person name="Hirao M."/>
            <person name="Ohmori Y."/>
            <person name="Kawabata A."/>
            <person name="Hikiji T."/>
            <person name="Kobatake N."/>
            <person name="Inagaki H."/>
            <person name="Ikema Y."/>
            <person name="Okamoto S."/>
            <person name="Okitani R."/>
            <person name="Kawakami T."/>
            <person name="Noguchi S."/>
            <person name="Itoh T."/>
            <person name="Shigeta K."/>
            <person name="Senba T."/>
            <person name="Matsumura K."/>
            <person name="Nakajima Y."/>
            <person name="Mizuno T."/>
            <person name="Morinaga M."/>
            <person name="Sasaki M."/>
            <person name="Togashi T."/>
            <person name="Oyama M."/>
            <person name="Hata H."/>
            <person name="Watanabe M."/>
            <person name="Komatsu T."/>
            <person name="Mizushima-Sugano J."/>
            <person name="Satoh T."/>
            <person name="Shirai Y."/>
            <person name="Takahashi Y."/>
            <person name="Nakagawa K."/>
            <person name="Okumura K."/>
            <person name="Nagase T."/>
            <person name="Nomura N."/>
            <person name="Kikuchi H."/>
            <person name="Masuho Y."/>
            <person name="Yamashita R."/>
            <person name="Nakai K."/>
            <person name="Yada T."/>
            <person name="Nakamura Y."/>
            <person name="Ohara O."/>
            <person name="Isogai T."/>
            <person name="Sugano S."/>
        </authorList>
    </citation>
    <scope>NUCLEOTIDE SEQUENCE [LARGE SCALE MRNA] (ISOFORM 1)</scope>
    <source>
        <tissue>Testis</tissue>
    </source>
</reference>
<reference key="2">
    <citation type="journal article" date="2006" name="Nature">
        <title>DNA sequence of human chromosome 17 and analysis of rearrangement in the human lineage.</title>
        <authorList>
            <person name="Zody M.C."/>
            <person name="Garber M."/>
            <person name="Adams D.J."/>
            <person name="Sharpe T."/>
            <person name="Harrow J."/>
            <person name="Lupski J.R."/>
            <person name="Nicholson C."/>
            <person name="Searle S.M."/>
            <person name="Wilming L."/>
            <person name="Young S.K."/>
            <person name="Abouelleil A."/>
            <person name="Allen N.R."/>
            <person name="Bi W."/>
            <person name="Bloom T."/>
            <person name="Borowsky M.L."/>
            <person name="Bugalter B.E."/>
            <person name="Butler J."/>
            <person name="Chang J.L."/>
            <person name="Chen C.-K."/>
            <person name="Cook A."/>
            <person name="Corum B."/>
            <person name="Cuomo C.A."/>
            <person name="de Jong P.J."/>
            <person name="DeCaprio D."/>
            <person name="Dewar K."/>
            <person name="FitzGerald M."/>
            <person name="Gilbert J."/>
            <person name="Gibson R."/>
            <person name="Gnerre S."/>
            <person name="Goldstein S."/>
            <person name="Grafham D.V."/>
            <person name="Grocock R."/>
            <person name="Hafez N."/>
            <person name="Hagopian D.S."/>
            <person name="Hart E."/>
            <person name="Norman C.H."/>
            <person name="Humphray S."/>
            <person name="Jaffe D.B."/>
            <person name="Jones M."/>
            <person name="Kamal M."/>
            <person name="Khodiyar V.K."/>
            <person name="LaButti K."/>
            <person name="Laird G."/>
            <person name="Lehoczky J."/>
            <person name="Liu X."/>
            <person name="Lokyitsang T."/>
            <person name="Loveland J."/>
            <person name="Lui A."/>
            <person name="Macdonald P."/>
            <person name="Major J.E."/>
            <person name="Matthews L."/>
            <person name="Mauceli E."/>
            <person name="McCarroll S.A."/>
            <person name="Mihalev A.H."/>
            <person name="Mudge J."/>
            <person name="Nguyen C."/>
            <person name="Nicol R."/>
            <person name="O'Leary S.B."/>
            <person name="Osoegawa K."/>
            <person name="Schwartz D.C."/>
            <person name="Shaw-Smith C."/>
            <person name="Stankiewicz P."/>
            <person name="Steward C."/>
            <person name="Swarbreck D."/>
            <person name="Venkataraman V."/>
            <person name="Whittaker C.A."/>
            <person name="Yang X."/>
            <person name="Zimmer A.R."/>
            <person name="Bradley A."/>
            <person name="Hubbard T."/>
            <person name="Birren B.W."/>
            <person name="Rogers J."/>
            <person name="Lander E.S."/>
            <person name="Nusbaum C."/>
        </authorList>
    </citation>
    <scope>NUCLEOTIDE SEQUENCE [LARGE SCALE GENOMIC DNA]</scope>
</reference>
<reference key="3">
    <citation type="journal article" date="2004" name="Genome Res.">
        <title>The status, quality, and expansion of the NIH full-length cDNA project: the Mammalian Gene Collection (MGC).</title>
        <authorList>
            <consortium name="The MGC Project Team"/>
        </authorList>
    </citation>
    <scope>NUCLEOTIDE SEQUENCE [LARGE SCALE MRNA] (ISOFORM 2)</scope>
</reference>
<keyword id="KW-0025">Alternative splicing</keyword>
<keyword id="KW-1185">Reference proteome</keyword>
<proteinExistence type="uncertain"/>
<protein>
    <recommendedName>
        <fullName>Putative uncharacterized protein encoded by LINC00469</fullName>
    </recommendedName>
</protein>
<name>CQ054_HUMAN</name>
<sequence length="141" mass="15976">MTSSAPTLPDVTIRNVSRHIQMSLMGKGEPPWLCRLQLEPLLQAMEEQQLGNLEARWEVEKHGNEVSGSTSREVWEDADFICPVLKQCTNPKLNENKNIHQAKECEKSPFLSLSPHQQWKPGLPRRNDALPTSLCLCCSEN</sequence>
<dbReference type="EMBL" id="AK097638">
    <property type="protein sequence ID" value="BAC05128.1"/>
    <property type="molecule type" value="mRNA"/>
</dbReference>
<dbReference type="EMBL" id="AC125421">
    <property type="status" value="NOT_ANNOTATED_CDS"/>
    <property type="molecule type" value="Genomic_DNA"/>
</dbReference>
<dbReference type="EMBL" id="BC101214">
    <property type="status" value="NOT_ANNOTATED_CDS"/>
    <property type="molecule type" value="mRNA"/>
</dbReference>
<dbReference type="iPTMnet" id="Q8N7U9"/>
<dbReference type="PhosphoSitePlus" id="Q8N7U9"/>
<dbReference type="BioMuta" id="HGNC:26863"/>
<dbReference type="DMDM" id="74729286"/>
<dbReference type="AGR" id="HGNC:26863"/>
<dbReference type="GeneCards" id="LINC00469"/>
<dbReference type="HGNC" id="HGNC:26863">
    <property type="gene designation" value="LINC00469"/>
</dbReference>
<dbReference type="neXtProt" id="NX_Q8N7U9"/>
<dbReference type="InParanoid" id="Q8N7U9"/>
<dbReference type="PAN-GO" id="Q8N7U9">
    <property type="GO annotations" value="0 GO annotations based on evolutionary models"/>
</dbReference>
<dbReference type="Pharos" id="Q8N7U9">
    <property type="development level" value="Tdark"/>
</dbReference>
<dbReference type="Proteomes" id="UP000005640">
    <property type="component" value="Unplaced"/>
</dbReference>
<dbReference type="RNAct" id="Q8N7U9">
    <property type="molecule type" value="protein"/>
</dbReference>
<organism>
    <name type="scientific">Homo sapiens</name>
    <name type="common">Human</name>
    <dbReference type="NCBI Taxonomy" id="9606"/>
    <lineage>
        <taxon>Eukaryota</taxon>
        <taxon>Metazoa</taxon>
        <taxon>Chordata</taxon>
        <taxon>Craniata</taxon>
        <taxon>Vertebrata</taxon>
        <taxon>Euteleostomi</taxon>
        <taxon>Mammalia</taxon>
        <taxon>Eutheria</taxon>
        <taxon>Euarchontoglires</taxon>
        <taxon>Primates</taxon>
        <taxon>Haplorrhini</taxon>
        <taxon>Catarrhini</taxon>
        <taxon>Hominidae</taxon>
        <taxon>Homo</taxon>
    </lineage>
</organism>